<proteinExistence type="inferred from homology"/>
<sequence length="205" mass="21156">MSSIQLGKKSNEKKVLAIALVTVFTGTGVAQAADVTAQAVATWSATAKKDTTSKLVVTPLGSLAFQYAEGIKGFNSQKGLFDVAIEGDSTATAFKLTSRLITNTLTQLDTSGSTLNVGVDYNGATVEKTGDTVMIDTANGVLGGNLSPLANGYNASNRTTAQDGFTFSIISGTTNGTTAVTDYSTLPEGIWSGDVSVQFDATWTS</sequence>
<dbReference type="EMBL" id="CP000243">
    <property type="protein sequence ID" value="ABE05810.1"/>
    <property type="molecule type" value="Genomic_DNA"/>
</dbReference>
<dbReference type="RefSeq" id="WP_000095070.1">
    <property type="nucleotide sequence ID" value="NZ_CP064825.1"/>
</dbReference>
<dbReference type="SMR" id="Q1RFQ4"/>
<dbReference type="KEGG" id="eci:UTI89_C0309"/>
<dbReference type="HOGENOM" id="CLU_120328_0_0_6"/>
<dbReference type="Proteomes" id="UP000001952">
    <property type="component" value="Chromosome"/>
</dbReference>
<dbReference type="GO" id="GO:0009289">
    <property type="term" value="C:pilus"/>
    <property type="evidence" value="ECO:0007669"/>
    <property type="project" value="UniProtKB-SubCell"/>
</dbReference>
<dbReference type="Gene3D" id="2.60.40.3290">
    <property type="entry name" value="Fimbrial protein EcpA"/>
    <property type="match status" value="1"/>
</dbReference>
<dbReference type="InterPro" id="IPR016514">
    <property type="entry name" value="EcpA"/>
</dbReference>
<dbReference type="InterPro" id="IPR038478">
    <property type="entry name" value="Fimbrillin_EcpA_sf"/>
</dbReference>
<dbReference type="Pfam" id="PF16449">
    <property type="entry name" value="MatB"/>
    <property type="match status" value="1"/>
</dbReference>
<dbReference type="PIRSF" id="PIRSF007320">
    <property type="entry name" value="Fimbrillin_MatB"/>
    <property type="match status" value="1"/>
</dbReference>
<comment type="function">
    <text evidence="1">Part of the ecpRABCDE operon, which encodes the E.coli common pilus (ECP). ECP is found in both commensal and pathogenic strains and plays a dual role in early-stage biofilm development and host cell recognition. Major subunit of the fimbria (By similarity).</text>
</comment>
<comment type="subunit">
    <text evidence="1">Self-associates. Forms filaments. Interacts with EcpD (By similarity).</text>
</comment>
<comment type="subcellular location">
    <subcellularLocation>
        <location evidence="1">Fimbrium</location>
    </subcellularLocation>
</comment>
<comment type="induction">
    <text evidence="1">Negatively regulated by H-NS. Positively regulated by IHF and EcpR (By similarity).</text>
</comment>
<comment type="similarity">
    <text evidence="3">Belongs to the EcpA/MatB fimbrillin family.</text>
</comment>
<protein>
    <recommendedName>
        <fullName>Common pilus major fimbrillin subunit EcpA</fullName>
    </recommendedName>
    <alternativeName>
        <fullName>MatB fimbrillin</fullName>
    </alternativeName>
</protein>
<organism>
    <name type="scientific">Escherichia coli (strain UTI89 / UPEC)</name>
    <dbReference type="NCBI Taxonomy" id="364106"/>
    <lineage>
        <taxon>Bacteria</taxon>
        <taxon>Pseudomonadati</taxon>
        <taxon>Pseudomonadota</taxon>
        <taxon>Gammaproteobacteria</taxon>
        <taxon>Enterobacterales</taxon>
        <taxon>Enterobacteriaceae</taxon>
        <taxon>Escherichia</taxon>
    </lineage>
</organism>
<evidence type="ECO:0000250" key="1"/>
<evidence type="ECO:0000255" key="2"/>
<evidence type="ECO:0000305" key="3"/>
<keyword id="KW-0281">Fimbrium</keyword>
<keyword id="KW-0732">Signal</keyword>
<reference key="1">
    <citation type="journal article" date="2006" name="Proc. Natl. Acad. Sci. U.S.A.">
        <title>Identification of genes subject to positive selection in uropathogenic strains of Escherichia coli: a comparative genomics approach.</title>
        <authorList>
            <person name="Chen S.L."/>
            <person name="Hung C.-S."/>
            <person name="Xu J."/>
            <person name="Reigstad C.S."/>
            <person name="Magrini V."/>
            <person name="Sabo A."/>
            <person name="Blasiar D."/>
            <person name="Bieri T."/>
            <person name="Meyer R.R."/>
            <person name="Ozersky P."/>
            <person name="Armstrong J.R."/>
            <person name="Fulton R.S."/>
            <person name="Latreille J.P."/>
            <person name="Spieth J."/>
            <person name="Hooton T.M."/>
            <person name="Mardis E.R."/>
            <person name="Hultgren S.J."/>
            <person name="Gordon J.I."/>
        </authorList>
    </citation>
    <scope>NUCLEOTIDE SEQUENCE [LARGE SCALE GENOMIC DNA]</scope>
    <source>
        <strain>UTI89 / UPEC</strain>
    </source>
</reference>
<name>ECPA_ECOUT</name>
<gene>
    <name type="primary">ecpA</name>
    <name type="synonym">matB</name>
    <name type="ordered locus">UTI89_C0309</name>
</gene>
<accession>Q1RFQ4</accession>
<feature type="signal peptide" evidence="2">
    <location>
        <begin position="1"/>
        <end position="32"/>
    </location>
</feature>
<feature type="chain" id="PRO_0000367925" description="Common pilus major fimbrillin subunit EcpA">
    <location>
        <begin position="33"/>
        <end position="205"/>
    </location>
</feature>